<dbReference type="EC" id="1.-.-.-" evidence="9"/>
<dbReference type="EMBL" id="AY371490">
    <property type="protein sequence ID" value="AAS66029.1"/>
    <property type="molecule type" value="Genomic_DNA"/>
</dbReference>
<dbReference type="EMBL" id="JZEE01000729">
    <property type="protein sequence ID" value="KJK60775.1"/>
    <property type="molecule type" value="Genomic_DNA"/>
</dbReference>
<dbReference type="SMR" id="Q6UEF0"/>
<dbReference type="STRING" id="1403190.Q6UEF0"/>
<dbReference type="OrthoDB" id="1663137at2759"/>
<dbReference type="Proteomes" id="UP000033540">
    <property type="component" value="Unassembled WGS sequence"/>
</dbReference>
<dbReference type="GO" id="GO:0005829">
    <property type="term" value="C:cytosol"/>
    <property type="evidence" value="ECO:0000314"/>
    <property type="project" value="UniProt"/>
</dbReference>
<dbReference type="GO" id="GO:0036382">
    <property type="term" value="F:flavin reductase (NADH) activity"/>
    <property type="evidence" value="ECO:0000315"/>
    <property type="project" value="UniProt"/>
</dbReference>
<dbReference type="GO" id="GO:0010181">
    <property type="term" value="F:FMN binding"/>
    <property type="evidence" value="ECO:0007669"/>
    <property type="project" value="InterPro"/>
</dbReference>
<dbReference type="GO" id="GO:0045122">
    <property type="term" value="P:aflatoxin biosynthetic process"/>
    <property type="evidence" value="ECO:0000315"/>
    <property type="project" value="GO_Central"/>
</dbReference>
<dbReference type="CDD" id="cd04733">
    <property type="entry name" value="OYE_like_2_FMN"/>
    <property type="match status" value="1"/>
</dbReference>
<dbReference type="Gene3D" id="3.20.20.70">
    <property type="entry name" value="Aldolase class I"/>
    <property type="match status" value="1"/>
</dbReference>
<dbReference type="InterPro" id="IPR013785">
    <property type="entry name" value="Aldolase_TIM"/>
</dbReference>
<dbReference type="InterPro" id="IPR051799">
    <property type="entry name" value="NADH_flavin_oxidoreductase"/>
</dbReference>
<dbReference type="InterPro" id="IPR001155">
    <property type="entry name" value="OxRdtase_FMN_N"/>
</dbReference>
<dbReference type="PANTHER" id="PTHR43656">
    <property type="entry name" value="BINDING OXIDOREDUCTASE, PUTATIVE (AFU_ORTHOLOGUE AFUA_2G08260)-RELATED"/>
    <property type="match status" value="1"/>
</dbReference>
<dbReference type="PANTHER" id="PTHR43656:SF5">
    <property type="entry name" value="NADH:FLAVIN OXIDOREDUCTASE_NADH OXIDASE N-TERMINAL DOMAIN-CONTAINING PROTEIN"/>
    <property type="match status" value="1"/>
</dbReference>
<dbReference type="Pfam" id="PF00724">
    <property type="entry name" value="Oxidored_FMN"/>
    <property type="match status" value="1"/>
</dbReference>
<dbReference type="SUPFAM" id="SSF51395">
    <property type="entry name" value="FMN-linked oxidoreductases"/>
    <property type="match status" value="1"/>
</dbReference>
<sequence length="444" mass="48459">MARAGQAVDPSPLGQPLEFHFARRSAPNRFLKAGMSERMCSWTEENPSARGIPSRELIETYRTWGRGNIGAIVTGNVMIDPNHIEAEGNPTIPPNALFSGERFDQFANLAAAARANGSLILAQISHPGRQTPSHRQPEPISASDVPLDTENMGNTFAVPRAATENEIKNIITGFAHAAEFLDRAGYDGVELHAAHGYLLNQFLSRATNLRTDKYGGTLTNRMRLILEIRAAITEKVRPGFIVGIKINSVEFQPNGIVPDEACELCCALEEHRFDFVELSGGKYKNLEEDDNAKHIISKRHEAFFLDVAQKVVSSLTKMKSYLTGGFRSTAGMVDGLQTVDGIGLARPFCQEPYLCHDILRGKIPGAIIPVMDQLNYQLTVAAACIQMRQIGNKVQPVDLSSQDAVDAITAAAEGWLKRKAIDRSEEAFKPPLLSGDAAPLSVEA</sequence>
<proteinExistence type="evidence at transcript level"/>
<comment type="function">
    <text evidence="3 4 8">NADH-dependent flavin oxidoreductase; part of the gene cluster that mediates the biosynthesis of aflatoxins, a group of polyketide-derived furanocoumarins, and part of the most toxic and carcinogenic compounds among the known mycotoxins (PubMed:15006741, PubMed:18486503, PubMed:19325828). The four major aflatoxins produced by A.parasiticus are aflatoxin B1 (AFB1), aflatoxin B2 (AFB2), aflatoxin G1 (AFG1) and aflatoxin G2 (AFG2) (PubMed:15006741). Within the aflatoxin pathway, the NADH-dependent flavin oxidoreductase nadA is specifically required for the last steps in which OMST is converted specifically to aflatoxin G1 (PubMed:15006741, PubMed:18486503, PubMed:19325828). The biosynthesis of aflatoxins begins with the norsolorinic acid synthase aflC that combines a hexanoyl starter unit produced by the fatty acid synthase aflA/aflB and 7 malonyl-CoA extender units to synthesize the precursor NOR. The second step is the conversion of NOR to averantin and requires the norsolorinic acid ketoreductase aflD, which catalyzes the dehydration of norsolorinic acid to form (1'S)-averantin. The norsolorinic acid reductases aflE and aflF may also play a role in the conversion of NOR to AVN. The cytochrome P450 monooxygenase aflG then catalyzes the hydroxylation of AVN to 5'hydroxyaverantin (HAVN). The next step is performed by the 5'-hydroxyaverantin dehydrogenase aflH that transforms HAVN to 5'-oxoaverantin (OAVN) which is further converted to averufin (AVF) by aflK that plays a dual role in the pathway, as a 5'-oxoaverantin cyclase that mediates conversion of 5'-oxoaverantin, as well as a versicolorin B synthase in a later step in the pathway. The averufin oxidase aflI catalyzes the conversion of AVF to versiconal hemiacetal acetate (VHA). VHA is then the substrate for the versiconal hemiacetal acetate esterase aflJ to yield versiconal (VAL). Versicolorin B synthase aflK then converts VAL to versicolorin B (VERB) by closing the bisfuran ring of aflatoxin which is required for DNA-binding, thus giving to aflatoxin its activity as a mutagen. Then, the activity of the versicolorin B desaturase aflL leads to versicolorin A (VERA). A branch point starts from VERB since it can also be converted to dihydrodemethylsterigmatocystin (DMDHST), probably also by aflL, VERA being a precursor for aflatoxins B1 and G1, and DMDHST for aflatoxins B2 and G2. Next, the versicolorin reductase aflM and the cytochrome P450 monooxygenase aflN are involved in conversion of VERA to demethylsterigmatocystin (DMST). AflX and aflY seem also involved in this step, through probable aflX-mediated epoxide ring-opening step following versicolorin A oxidation and aflY-mediated Baeyer-Villiger oxidation required for the formation of the xanthone ring. The methyltransferase aflO then leads to the modification of DMST to sterigmatocystin (ST), and of DMDHST to dihydrosterigmatocystin (DHST). Both ST and DHST are then substrates of the O-methyltransferase aflP to yield O-methylsterigmatocystin (OMST) and dihydro-O-methylsterigmatocystin (DHOMST), respectively. Finally OMST is converted to aflatoxins B1 and G1, and DHOMST to aflatoxins B2 and G2, via the action of several enzymes including O-methylsterigmatocystin oxidoreductase aflQ, the cytochrome P450 monooxygenase aflU, but also the NADH-dependent flavin oxidoreductase nadA which is specifically required for the synthesis of AFG1 (PubMed:15006741).</text>
</comment>
<comment type="subcellular location">
    <subcellularLocation>
        <location evidence="3">Cytoplasm</location>
        <location evidence="3">Cytosol</location>
    </subcellularLocation>
</comment>
<comment type="induction">
    <text evidence="3">Expression is regulated by the aflatoxin cluster-specific transcription factor aflR (PubMed:18486503).</text>
</comment>
<comment type="disruption phenotype">
    <text evidence="3 4">Does not show any remarkable difference in production of B-group aflatoxin (AFB1 and AFB2) compared to the wild-type but leads to significant decrease in production of G-group aflatoxins (AFG1 and AFG2) (PubMed:18486503). Leads to the accumulation of a yellow AFG1 precursor called NADA (PubMed:18486503, PubMed:19325828).</text>
</comment>
<comment type="similarity">
    <text evidence="7">Belongs to the NADH:flavin oxidoreductase/NADH oxidase family.</text>
</comment>
<feature type="chain" id="PRO_0000438344" description="NADH-dependent flavin oxidoreductase nadA">
    <location>
        <begin position="1"/>
        <end position="444"/>
    </location>
</feature>
<feature type="region of interest" description="Disordered" evidence="2">
    <location>
        <begin position="127"/>
        <end position="149"/>
    </location>
</feature>
<feature type="binding site" evidence="1">
    <location>
        <begin position="37"/>
        <end position="40"/>
    </location>
    <ligand>
        <name>FMN</name>
        <dbReference type="ChEBI" id="CHEBI:58210"/>
    </ligand>
</feature>
<feature type="binding site" evidence="1">
    <location>
        <position position="123"/>
    </location>
    <ligand>
        <name>FMN</name>
        <dbReference type="ChEBI" id="CHEBI:58210"/>
    </ligand>
</feature>
<feature type="binding site" evidence="1">
    <location>
        <begin position="192"/>
        <end position="195"/>
    </location>
    <ligand>
        <name>substrate</name>
    </ligand>
</feature>
<feature type="binding site" evidence="1">
    <location>
        <begin position="345"/>
        <end position="346"/>
    </location>
    <ligand>
        <name>FMN</name>
        <dbReference type="ChEBI" id="CHEBI:58210"/>
    </ligand>
</feature>
<feature type="sequence conflict" description="In Ref. 5; KJK60775." evidence="7" ref="5">
    <original>G</original>
    <variation>A</variation>
    <location>
        <position position="34"/>
    </location>
</feature>
<evidence type="ECO:0000250" key="1">
    <source>
        <dbReference type="UniProtKB" id="P54550"/>
    </source>
</evidence>
<evidence type="ECO:0000256" key="2">
    <source>
        <dbReference type="SAM" id="MobiDB-lite"/>
    </source>
</evidence>
<evidence type="ECO:0000269" key="3">
    <source>
    </source>
</evidence>
<evidence type="ECO:0000269" key="4">
    <source>
    </source>
</evidence>
<evidence type="ECO:0000303" key="5">
    <source>
    </source>
</evidence>
<evidence type="ECO:0000303" key="6">
    <source>
    </source>
</evidence>
<evidence type="ECO:0000305" key="7"/>
<evidence type="ECO:0000305" key="8">
    <source>
    </source>
</evidence>
<evidence type="ECO:0000305" key="9">
    <source>
    </source>
</evidence>
<accession>Q6UEF0</accession>
<accession>A0A0F0HZ66</accession>
<keyword id="KW-0963">Cytoplasm</keyword>
<keyword id="KW-0274">FAD</keyword>
<keyword id="KW-0285">Flavoprotein</keyword>
<keyword id="KW-0288">FMN</keyword>
<keyword id="KW-0520">NAD</keyword>
<keyword id="KW-0560">Oxidoreductase</keyword>
<keyword id="KW-1185">Reference proteome</keyword>
<reference key="1">
    <citation type="journal article" date="2000" name="Appl. Microbiol. Biotechnol.">
        <title>Genes encoding cytochrome P450 and monooxygenase enzymes define one end of the aflatoxin pathway gene cluster in Aspergillus parasiticus.</title>
        <authorList>
            <person name="Yu J."/>
            <person name="Chang P.-K."/>
            <person name="Bhatnagar D."/>
            <person name="Cleveland T.E."/>
        </authorList>
    </citation>
    <scope>NUCLEOTIDE SEQUENCE [GENOMIC DNA]</scope>
    <source>
        <strain>ATCC 56775 / NRRL 5862 / SRRC 143 / SU-1</strain>
    </source>
</reference>
<reference key="2">
    <citation type="journal article" date="2000" name="Biochim. Biophys. Acta">
        <title>Cloning of a sugar utilization gene cluster in Aspergillus parasiticus.</title>
        <authorList>
            <person name="Yu J."/>
            <person name="Chang P."/>
            <person name="Bhatnagar D."/>
            <person name="Cleveland T.E."/>
        </authorList>
    </citation>
    <scope>NUCLEOTIDE SEQUENCE [GENOMIC DNA]</scope>
    <source>
        <strain>ATCC 56775 / NRRL 5862 / SRRC 143 / SU-1</strain>
    </source>
</reference>
<reference key="3">
    <citation type="journal article" date="2004" name="Appl. Environ. Microbiol.">
        <title>Clustered pathway genes in aflatoxin biosynthesis.</title>
        <authorList>
            <person name="Yu J."/>
            <person name="Chang P.K."/>
            <person name="Ehrlich K.C."/>
            <person name="Cary J.W."/>
            <person name="Bhatnagar D."/>
            <person name="Cleveland T.E."/>
            <person name="Payne G.A."/>
            <person name="Linz J.E."/>
            <person name="Woloshuk C.P."/>
            <person name="Bennett J.W."/>
        </authorList>
    </citation>
    <scope>NUCLEOTIDE SEQUENCE [GENOMIC DNA]</scope>
    <source>
        <strain>ATCC 56775 / NRRL 5862 / SRRC 143 / SU-1</strain>
    </source>
</reference>
<reference key="4">
    <citation type="journal article" date="2004" name="FEBS Lett.">
        <title>Completed sequence of aflatoxin pathway gene cluster in Aspergillus parasiticus.</title>
        <authorList>
            <person name="Yu J."/>
            <person name="Bhatnagar D."/>
            <person name="Cleveland T.E."/>
        </authorList>
    </citation>
    <scope>NUCLEOTIDE SEQUENCE [GENOMIC DNA]</scope>
    <source>
        <strain>ATCC 56775 / NRRL 5862 / SRRC 143 / SU-1</strain>
    </source>
</reference>
<reference key="5">
    <citation type="submission" date="2015-02" db="EMBL/GenBank/DDBJ databases">
        <title>Draft genome sequence of Aspergillus parasiticus SU-1.</title>
        <authorList>
            <person name="Yu J."/>
            <person name="Fedorova N."/>
            <person name="Yin Y."/>
            <person name="Losada L."/>
            <person name="Zafar N."/>
            <person name="Taujale R."/>
            <person name="Ehrlich K.C."/>
            <person name="Bhatnagar D."/>
            <person name="Cleveland T.E."/>
            <person name="Bennett J.W."/>
            <person name="Nierman W.C."/>
        </authorList>
    </citation>
    <scope>NUCLEOTIDE SEQUENCE [LARGE SCALE GENOMIC DNA]</scope>
    <source>
        <strain>ATCC 56775 / NRRL 5862 / SRRC 143 / SU-1</strain>
    </source>
</reference>
<reference key="6">
    <citation type="journal article" date="2008" name="Fungal Genet. Biol.">
        <title>Involvement of the nadA gene in formation of G-group aflatoxins in Aspergillus parasiticus.</title>
        <authorList>
            <person name="Cai J."/>
            <person name="Zeng H."/>
            <person name="Shima Y."/>
            <person name="Hatabayashi H."/>
            <person name="Nakagawa H."/>
            <person name="Ito Y."/>
            <person name="Adachi Y."/>
            <person name="Nakajima H."/>
            <person name="Yabe K."/>
        </authorList>
    </citation>
    <scope>FUNCTION</scope>
    <scope>INDUCTION</scope>
    <scope>DISRUPTION PHENOTYPE</scope>
    <scope>SUBCELLULAR LOCATION</scope>
</reference>
<reference key="7">
    <citation type="journal article" date="2008" name="Int. J. Mol. Sci.">
        <title>Are the genes nadA and norB involved in formation of aflatoxin G(1)?</title>
        <authorList>
            <person name="Ehrlich K.C."/>
            <person name="Scharfenstein L.L. Jr."/>
            <person name="Montalbano B.G."/>
            <person name="Chang P.K."/>
        </authorList>
    </citation>
    <scope>FUNCTION</scope>
    <scope>DISRUPTION PHENOTYPE</scope>
</reference>
<name>NADA_ASPPU</name>
<organism>
    <name type="scientific">Aspergillus parasiticus (strain ATCC 56775 / NRRL 5862 / SRRC 143 / SU-1)</name>
    <dbReference type="NCBI Taxonomy" id="1403190"/>
    <lineage>
        <taxon>Eukaryota</taxon>
        <taxon>Fungi</taxon>
        <taxon>Dikarya</taxon>
        <taxon>Ascomycota</taxon>
        <taxon>Pezizomycotina</taxon>
        <taxon>Eurotiomycetes</taxon>
        <taxon>Eurotiomycetidae</taxon>
        <taxon>Eurotiales</taxon>
        <taxon>Aspergillaceae</taxon>
        <taxon>Aspergillus</taxon>
        <taxon>Aspergillus subgen. Circumdati</taxon>
    </lineage>
</organism>
<gene>
    <name evidence="5" type="primary">nadA</name>
    <name type="ORF">P875_00053008</name>
</gene>
<protein>
    <recommendedName>
        <fullName evidence="7">NADH-dependent flavin oxidoreductase nadA</fullName>
        <ecNumber evidence="9">1.-.-.-</ecNumber>
    </recommendedName>
    <alternativeName>
        <fullName evidence="6">Aflatoxin biosynthesis protein nadA</fullName>
    </alternativeName>
</protein>